<protein>
    <recommendedName>
        <fullName>Uncharacterized mitochondrial protein AtMg01110</fullName>
    </recommendedName>
    <alternativeName>
        <fullName>ORF251</fullName>
    </alternativeName>
</protein>
<organism>
    <name type="scientific">Arabidopsis thaliana</name>
    <name type="common">Mouse-ear cress</name>
    <dbReference type="NCBI Taxonomy" id="3702"/>
    <lineage>
        <taxon>Eukaryota</taxon>
        <taxon>Viridiplantae</taxon>
        <taxon>Streptophyta</taxon>
        <taxon>Embryophyta</taxon>
        <taxon>Tracheophyta</taxon>
        <taxon>Spermatophyta</taxon>
        <taxon>Magnoliopsida</taxon>
        <taxon>eudicotyledons</taxon>
        <taxon>Gunneridae</taxon>
        <taxon>Pentapetalae</taxon>
        <taxon>rosids</taxon>
        <taxon>malvids</taxon>
        <taxon>Brassicales</taxon>
        <taxon>Brassicaceae</taxon>
        <taxon>Camelineae</taxon>
        <taxon>Arabidopsis</taxon>
    </lineage>
</organism>
<keyword id="KW-0496">Mitochondrion</keyword>
<keyword id="KW-1185">Reference proteome</keyword>
<feature type="chain" id="PRO_0000196813" description="Uncharacterized mitochondrial protein AtMg01110">
    <location>
        <begin position="1"/>
        <end position="251"/>
    </location>
</feature>
<sequence>MSVLRRIPQDGTFHQEGPIHRLAKRRPRFIASFDLSAATDRWPVPVIYELMACLFGQTMASCIVNGALALNSCSLKSVTGRHDEVVFVAGQPLGYYGSWALFALSHHAIVWLAALRAYPHQTRPFLDYALLGDDIVIADRSVAKEYRSLLDALQVDISDAKSIVSETGCLEFAKRFWVKIMSKDLSPVSAKAVLESYFLVGTQQLAYKYKLSPKTCLRLNKAGYRVLGQMDTTLRPYPGVLVGFRRYLVSF</sequence>
<gene>
    <name type="ordered locus">AtMg01110</name>
</gene>
<dbReference type="EMBL" id="Y08501">
    <property type="protein sequence ID" value="CAA69796.1"/>
    <property type="molecule type" value="Genomic_DNA"/>
</dbReference>
<dbReference type="EMBL" id="BK010421">
    <property type="status" value="NOT_ANNOTATED_CDS"/>
    <property type="molecule type" value="Genomic_DNA"/>
</dbReference>
<dbReference type="EMBL" id="AC007730">
    <property type="status" value="NOT_ANNOTATED_CDS"/>
    <property type="molecule type" value="Genomic_DNA"/>
</dbReference>
<dbReference type="RefSeq" id="NP_085564.1">
    <property type="nucleotide sequence ID" value="NC_001284.2"/>
</dbReference>
<dbReference type="PaxDb" id="3702-ATMG01110.1"/>
<dbReference type="EnsemblPlants" id="ATMG01110.1">
    <property type="protein sequence ID" value="ATMG01110.1"/>
    <property type="gene ID" value="ATMG01110"/>
</dbReference>
<dbReference type="Gramene" id="ATMG01110.1">
    <property type="protein sequence ID" value="ATMG01110.1"/>
    <property type="gene ID" value="ATMG01110"/>
</dbReference>
<dbReference type="Araport" id="ATMG01110"/>
<dbReference type="TAIR" id="ATMG01110">
    <property type="gene designation" value="ORF251"/>
</dbReference>
<dbReference type="eggNOG" id="ENOG502S5E8">
    <property type="taxonomic scope" value="Eukaryota"/>
</dbReference>
<dbReference type="HOGENOM" id="CLU_099627_0_0_1"/>
<dbReference type="InParanoid" id="P92543"/>
<dbReference type="OMA" id="HEWAMAV"/>
<dbReference type="PRO" id="PR:P92543"/>
<dbReference type="Proteomes" id="UP000006548">
    <property type="component" value="Mitochondrion MT"/>
</dbReference>
<dbReference type="ExpressionAtlas" id="P92543">
    <property type="expression patterns" value="baseline and differential"/>
</dbReference>
<dbReference type="GO" id="GO:0005739">
    <property type="term" value="C:mitochondrion"/>
    <property type="evidence" value="ECO:0007669"/>
    <property type="project" value="UniProtKB-SubCell"/>
</dbReference>
<dbReference type="InterPro" id="IPR008686">
    <property type="entry name" value="RNA_pol_mitovir"/>
</dbReference>
<dbReference type="PANTHER" id="PTHR34456">
    <property type="entry name" value="MITOVIRUS RNA-DEPENDENT RNA POLYMERASE"/>
    <property type="match status" value="1"/>
</dbReference>
<dbReference type="PANTHER" id="PTHR34456:SF14">
    <property type="entry name" value="MITOVIRUS RNA-DEPENDENT RNA POLYMERASE"/>
    <property type="match status" value="1"/>
</dbReference>
<dbReference type="Pfam" id="PF05919">
    <property type="entry name" value="Mitovir_RNA_pol"/>
    <property type="match status" value="1"/>
</dbReference>
<proteinExistence type="predicted"/>
<geneLocation type="mitochondrion"/>
<accession>P92543</accession>
<accession>Q1ZXX1</accession>
<comment type="subcellular location">
    <subcellularLocation>
        <location evidence="1">Mitochondrion</location>
    </subcellularLocation>
</comment>
<comment type="miscellaneous">
    <text>A stretch of 270 kb of the mitochondrial genome is duplicated within the centromere of chromosome 2 resulting in the duplication of the gene. The expression of this duplicated gene (At2g07749) is not demonstrated.</text>
</comment>
<name>M1110_ARATH</name>
<reference key="1">
    <citation type="journal article" date="1997" name="Nat. Genet.">
        <title>The mitochondrial genome of Arabidopsis thaliana contains 57 genes in 366,924 nucleotides.</title>
        <authorList>
            <person name="Unseld M."/>
            <person name="Marienfeld J.R."/>
            <person name="Brandt P."/>
            <person name="Brennicke A."/>
        </authorList>
    </citation>
    <scope>NUCLEOTIDE SEQUENCE [LARGE SCALE GENOMIC DNA]</scope>
    <source>
        <strain>cv. C24</strain>
    </source>
</reference>
<reference key="2">
    <citation type="journal article" date="2018" name="Plant Cell">
        <title>Correction of persistent errors in Arabidopsis reference mitochondrial genomes.</title>
        <authorList>
            <person name="Sloan D.B."/>
            <person name="Wu Z."/>
            <person name="Sharbrough J."/>
        </authorList>
    </citation>
    <scope>NUCLEOTIDE SEQUENCE [LARGE SCALE GENOMIC DNA]</scope>
    <source>
        <strain>cv. Columbia</strain>
    </source>
</reference>
<reference key="3">
    <citation type="journal article" date="1999" name="Nature">
        <title>Sequence and analysis of chromosome 2 of the plant Arabidopsis thaliana.</title>
        <authorList>
            <person name="Lin X."/>
            <person name="Kaul S."/>
            <person name="Rounsley S.D."/>
            <person name="Shea T.P."/>
            <person name="Benito M.-I."/>
            <person name="Town C.D."/>
            <person name="Fujii C.Y."/>
            <person name="Mason T.M."/>
            <person name="Bowman C.L."/>
            <person name="Barnstead M.E."/>
            <person name="Feldblyum T.V."/>
            <person name="Buell C.R."/>
            <person name="Ketchum K.A."/>
            <person name="Lee J.J."/>
            <person name="Ronning C.M."/>
            <person name="Koo H.L."/>
            <person name="Moffat K.S."/>
            <person name="Cronin L.A."/>
            <person name="Shen M."/>
            <person name="Pai G."/>
            <person name="Van Aken S."/>
            <person name="Umayam L."/>
            <person name="Tallon L.J."/>
            <person name="Gill J.E."/>
            <person name="Adams M.D."/>
            <person name="Carrera A.J."/>
            <person name="Creasy T.H."/>
            <person name="Goodman H.M."/>
            <person name="Somerville C.R."/>
            <person name="Copenhaver G.P."/>
            <person name="Preuss D."/>
            <person name="Nierman W.C."/>
            <person name="White O."/>
            <person name="Eisen J.A."/>
            <person name="Salzberg S.L."/>
            <person name="Fraser C.M."/>
            <person name="Venter J.C."/>
        </authorList>
    </citation>
    <scope>NUCLEOTIDE SEQUENCE [LARGE SCALE GENOMIC DNA] (AT2G07749)</scope>
    <source>
        <strain>cv. Columbia</strain>
    </source>
</reference>
<evidence type="ECO:0000305" key="1"/>